<dbReference type="EMBL" id="CP000656">
    <property type="protein sequence ID" value="ABP46223.1"/>
    <property type="molecule type" value="Genomic_DNA"/>
</dbReference>
<dbReference type="SMR" id="A4TBX3"/>
<dbReference type="STRING" id="350054.Mflv_3751"/>
<dbReference type="KEGG" id="mgi:Mflv_3751"/>
<dbReference type="eggNOG" id="COG0781">
    <property type="taxonomic scope" value="Bacteria"/>
</dbReference>
<dbReference type="HOGENOM" id="CLU_087843_2_3_11"/>
<dbReference type="OrthoDB" id="3528057at2"/>
<dbReference type="GO" id="GO:0005829">
    <property type="term" value="C:cytosol"/>
    <property type="evidence" value="ECO:0007669"/>
    <property type="project" value="TreeGrafter"/>
</dbReference>
<dbReference type="GO" id="GO:0003723">
    <property type="term" value="F:RNA binding"/>
    <property type="evidence" value="ECO:0007669"/>
    <property type="project" value="UniProtKB-UniRule"/>
</dbReference>
<dbReference type="GO" id="GO:0006353">
    <property type="term" value="P:DNA-templated transcription termination"/>
    <property type="evidence" value="ECO:0007669"/>
    <property type="project" value="UniProtKB-UniRule"/>
</dbReference>
<dbReference type="GO" id="GO:0031564">
    <property type="term" value="P:transcription antitermination"/>
    <property type="evidence" value="ECO:0007669"/>
    <property type="project" value="UniProtKB-KW"/>
</dbReference>
<dbReference type="CDD" id="cd00619">
    <property type="entry name" value="Terminator_NusB"/>
    <property type="match status" value="1"/>
</dbReference>
<dbReference type="Gene3D" id="1.10.940.10">
    <property type="entry name" value="NusB-like"/>
    <property type="match status" value="1"/>
</dbReference>
<dbReference type="HAMAP" id="MF_00073">
    <property type="entry name" value="NusB"/>
    <property type="match status" value="1"/>
</dbReference>
<dbReference type="InterPro" id="IPR035926">
    <property type="entry name" value="NusB-like_sf"/>
</dbReference>
<dbReference type="InterPro" id="IPR011605">
    <property type="entry name" value="NusB_fam"/>
</dbReference>
<dbReference type="InterPro" id="IPR006027">
    <property type="entry name" value="NusB_RsmB_TIM44"/>
</dbReference>
<dbReference type="NCBIfam" id="TIGR01951">
    <property type="entry name" value="nusB"/>
    <property type="match status" value="1"/>
</dbReference>
<dbReference type="PANTHER" id="PTHR11078:SF3">
    <property type="entry name" value="ANTITERMINATION NUSB DOMAIN-CONTAINING PROTEIN"/>
    <property type="match status" value="1"/>
</dbReference>
<dbReference type="PANTHER" id="PTHR11078">
    <property type="entry name" value="N UTILIZATION SUBSTANCE PROTEIN B-RELATED"/>
    <property type="match status" value="1"/>
</dbReference>
<dbReference type="Pfam" id="PF01029">
    <property type="entry name" value="NusB"/>
    <property type="match status" value="1"/>
</dbReference>
<dbReference type="SUPFAM" id="SSF48013">
    <property type="entry name" value="NusB-like"/>
    <property type="match status" value="1"/>
</dbReference>
<protein>
    <recommendedName>
        <fullName evidence="1">Transcription antitermination protein NusB</fullName>
    </recommendedName>
    <alternativeName>
        <fullName evidence="1">Antitermination factor NusB</fullName>
    </alternativeName>
</protein>
<gene>
    <name evidence="1" type="primary">nusB</name>
    <name type="ordered locus">Mflv_3751</name>
</gene>
<evidence type="ECO:0000255" key="1">
    <source>
        <dbReference type="HAMAP-Rule" id="MF_00073"/>
    </source>
</evidence>
<reference key="1">
    <citation type="submission" date="2007-04" db="EMBL/GenBank/DDBJ databases">
        <title>Complete sequence of chromosome of Mycobacterium gilvum PYR-GCK.</title>
        <authorList>
            <consortium name="US DOE Joint Genome Institute"/>
            <person name="Copeland A."/>
            <person name="Lucas S."/>
            <person name="Lapidus A."/>
            <person name="Barry K."/>
            <person name="Detter J.C."/>
            <person name="Glavina del Rio T."/>
            <person name="Hammon N."/>
            <person name="Israni S."/>
            <person name="Dalin E."/>
            <person name="Tice H."/>
            <person name="Pitluck S."/>
            <person name="Chain P."/>
            <person name="Malfatti S."/>
            <person name="Shin M."/>
            <person name="Vergez L."/>
            <person name="Schmutz J."/>
            <person name="Larimer F."/>
            <person name="Land M."/>
            <person name="Hauser L."/>
            <person name="Kyrpides N."/>
            <person name="Mikhailova N."/>
            <person name="Miller C."/>
            <person name="Richardson P."/>
        </authorList>
    </citation>
    <scope>NUCLEOTIDE SEQUENCE [LARGE SCALE GENOMIC DNA]</scope>
    <source>
        <strain>PYR-GCK</strain>
    </source>
</reference>
<accession>A4TBX3</accession>
<name>NUSB_MYCGI</name>
<organism>
    <name type="scientific">Mycolicibacterium gilvum (strain PYR-GCK)</name>
    <name type="common">Mycobacterium gilvum (strain PYR-GCK)</name>
    <dbReference type="NCBI Taxonomy" id="350054"/>
    <lineage>
        <taxon>Bacteria</taxon>
        <taxon>Bacillati</taxon>
        <taxon>Actinomycetota</taxon>
        <taxon>Actinomycetes</taxon>
        <taxon>Mycobacteriales</taxon>
        <taxon>Mycobacteriaceae</taxon>
        <taxon>Mycolicibacterium</taxon>
    </lineage>
</organism>
<feature type="chain" id="PRO_1000075192" description="Transcription antitermination protein NusB">
    <location>
        <begin position="1"/>
        <end position="164"/>
    </location>
</feature>
<keyword id="KW-0694">RNA-binding</keyword>
<keyword id="KW-0804">Transcription</keyword>
<keyword id="KW-0889">Transcription antitermination</keyword>
<keyword id="KW-0805">Transcription regulation</keyword>
<comment type="function">
    <text evidence="1">Involved in transcription antitermination. Required for transcription of ribosomal RNA (rRNA) genes. Binds specifically to the boxA antiterminator sequence of the ribosomal RNA (rrn) operons.</text>
</comment>
<comment type="similarity">
    <text evidence="1">Belongs to the NusB family.</text>
</comment>
<proteinExistence type="inferred from homology"/>
<sequence>MPDRKGDRGRHQARKRAVDLLFEAEARGITAAEVAEARNALADNGADDIAPLNPYTVTVARGVTDHAAHIDDLISAHLQGWTLDRLPAVDRAVLRVAVWELLHAVDVPEPVAVDEAVELAKQLSTDDSPGFVNGVLGQVMLVTPQIRAAAAAVQASPDSGSATP</sequence>